<sequence>MHSPLQTQQPEQRCWPMTSTVSEIEEVLPDEDSDRTTLLNGEPLRRRVSGKSPVDEGPRRIFRQQSFGRDIGHAAAETYLITGLSFKLLRYLGVGYRWMTKLLALTCYAMLLMPGFLQVAYSYFFSKQVRRSIVYGDQPRNRLDLYLPSNNDGLKPVVVFVTGGAWIIGYKAWGSLLGMQLAERDIIVACLDYRNFPQGTISDMVTDASQGISFVCNNISAFGGDPNRIYLMGQSAGAHIAACALLEQATKELKGESISWTVSQIKAYFGLSGGYNLYKLVDHFHNRGLYRSIFLSIMEGEESFEKFSPEVRLKDPVVGKAASLLPPIILFHGSSDYSIPCDESKTFTDALQAVGAKAELVLYSGKTHTDLFLQDPLRGGKDELFDDIVSVIHAEDNDGLTKDSLAPPRKRLVPELLLKLAREISPF</sequence>
<organism>
    <name type="scientific">Arabidopsis thaliana</name>
    <name type="common">Mouse-ear cress</name>
    <dbReference type="NCBI Taxonomy" id="3702"/>
    <lineage>
        <taxon>Eukaryota</taxon>
        <taxon>Viridiplantae</taxon>
        <taxon>Streptophyta</taxon>
        <taxon>Embryophyta</taxon>
        <taxon>Tracheophyta</taxon>
        <taxon>Spermatophyta</taxon>
        <taxon>Magnoliopsida</taxon>
        <taxon>eudicotyledons</taxon>
        <taxon>Gunneridae</taxon>
        <taxon>Pentapetalae</taxon>
        <taxon>rosids</taxon>
        <taxon>malvids</taxon>
        <taxon>Brassicales</taxon>
        <taxon>Brassicaceae</taxon>
        <taxon>Camelineae</taxon>
        <taxon>Arabidopsis</taxon>
    </lineage>
</organism>
<comment type="function">
    <text evidence="3 4 5">Catalyzes the demethylation of isoprenylcysteine methylesters. In vitro, is specific for N-acetyl-S-farnesyl-L-cysteine methyl ester (AFCme) and has low activity toward N-acetyl-S-geranyl-L-cysteine methyl ester (AGCme). Acts as a positive regulator of ABA signaling. May be involved in the demethylation and inactivation of isoprenylated negative regulators of abscisic acid (ABA) signaling. Carboxyl methylation is a reversible and potentially regulated step in the post-translational modification of prenylated proteins.</text>
</comment>
<comment type="catalytic activity">
    <reaction evidence="3 4">
        <text>[protein]-C-terminal S-[(2E,6E)-farnesyl]-L-cysteine methyl ester + H2O = [protein]-C-terminal S-[(2E,6E)-farnesyl]-L-cysteine + methanol + H(+)</text>
        <dbReference type="Rhea" id="RHEA:48520"/>
        <dbReference type="Rhea" id="RHEA-COMP:12125"/>
        <dbReference type="Rhea" id="RHEA-COMP:12126"/>
        <dbReference type="ChEBI" id="CHEBI:15377"/>
        <dbReference type="ChEBI" id="CHEBI:15378"/>
        <dbReference type="ChEBI" id="CHEBI:17790"/>
        <dbReference type="ChEBI" id="CHEBI:90510"/>
        <dbReference type="ChEBI" id="CHEBI:90511"/>
        <dbReference type="EC" id="3.1.1.n2"/>
    </reaction>
</comment>
<comment type="subcellular location">
    <subcellularLocation>
        <location evidence="5">Endoplasmic reticulum membrane</location>
    </subcellularLocation>
    <subcellularLocation>
        <location evidence="5">Golgi apparatus membrane</location>
        <topology evidence="5">Multi-pass membrane protein</topology>
    </subcellularLocation>
</comment>
<comment type="alternative products">
    <event type="alternative splicing"/>
    <isoform>
        <id>Q94AS5-1</id>
        <name>1</name>
        <sequence type="displayed"/>
    </isoform>
    <isoform>
        <id>Q94AS5-2</id>
        <name>2</name>
        <sequence type="described" ref="VSP_041622 VSP_041623"/>
    </isoform>
</comment>
<comment type="tissue specificity">
    <text evidence="5">Expressed in roots, rosette and cauline leaves, stems, flowers and siliques.</text>
</comment>
<comment type="induction">
    <text evidence="4 5">By ABA, osmotic stress and salt and heat treatments.</text>
</comment>
<comment type="miscellaneous">
    <text evidence="4">Plants overexpressing ICME exhibit enhanced ABA inhibition of seed germination and ABA induction of stomatal closure. Plant silencing ICME exhibit a reduced ABA sensitivity in seed germination assays.</text>
</comment>
<comment type="similarity">
    <text evidence="9">Belongs to the AB hydrolase superfamily. Isoprenylcysteine methylesterase family.</text>
</comment>
<comment type="sequence caution" evidence="9">
    <conflict type="erroneous gene model prediction">
        <sequence resource="EMBL-CDS" id="CAC01785"/>
    </conflict>
</comment>
<feature type="chain" id="PRO_0000411668" description="Isoprenylcysteine alpha-carbonyl methylesterase ICME">
    <location>
        <begin position="1"/>
        <end position="427"/>
    </location>
</feature>
<feature type="transmembrane region" description="Helical" evidence="1">
    <location>
        <begin position="102"/>
        <end position="122"/>
    </location>
</feature>
<feature type="transmembrane region" description="Helical" evidence="1">
    <location>
        <begin position="157"/>
        <end position="177"/>
    </location>
</feature>
<feature type="region of interest" description="Disordered" evidence="2">
    <location>
        <begin position="26"/>
        <end position="59"/>
    </location>
</feature>
<feature type="active site" evidence="9">
    <location>
        <position position="235"/>
    </location>
</feature>
<feature type="active site" evidence="9">
    <location>
        <position position="336"/>
    </location>
</feature>
<feature type="active site" evidence="9">
    <location>
        <position position="368"/>
    </location>
</feature>
<feature type="binding site" evidence="1">
    <location>
        <begin position="163"/>
        <end position="165"/>
    </location>
    <ligand>
        <name>substrate</name>
    </ligand>
</feature>
<feature type="binding site" evidence="1">
    <location>
        <begin position="234"/>
        <end position="236"/>
    </location>
    <ligand>
        <name>substrate</name>
    </ligand>
</feature>
<feature type="splice variant" id="VSP_041622" description="In isoform 2." evidence="9">
    <original>NLYKLVDHFHNRGLYRSIFLSIME</original>
    <variation>LLSFWIPVGFYVLFGLQQLICLSF</variation>
    <location>
        <begin position="276"/>
        <end position="299"/>
    </location>
</feature>
<feature type="splice variant" id="VSP_041623" description="In isoform 2." evidence="9">
    <location>
        <begin position="300"/>
        <end position="427"/>
    </location>
</feature>
<evidence type="ECO:0000255" key="1"/>
<evidence type="ECO:0000256" key="2">
    <source>
        <dbReference type="SAM" id="MobiDB-lite"/>
    </source>
</evidence>
<evidence type="ECO:0000269" key="3">
    <source>
    </source>
</evidence>
<evidence type="ECO:0000269" key="4">
    <source>
    </source>
</evidence>
<evidence type="ECO:0000269" key="5">
    <source>
    </source>
</evidence>
<evidence type="ECO:0000303" key="6">
    <source>
    </source>
</evidence>
<evidence type="ECO:0000303" key="7">
    <source>
    </source>
</evidence>
<evidence type="ECO:0000303" key="8">
    <source>
    </source>
</evidence>
<evidence type="ECO:0000305" key="9"/>
<evidence type="ECO:0000312" key="10">
    <source>
        <dbReference type="Araport" id="AT5G15860"/>
    </source>
</evidence>
<evidence type="ECO:0000312" key="11">
    <source>
        <dbReference type="EMBL" id="CAC01785.1"/>
    </source>
</evidence>
<name>ICME_ARATH</name>
<proteinExistence type="evidence at protein level"/>
<protein>
    <recommendedName>
        <fullName evidence="7 8">Isoprenylcysteine alpha-carbonyl methylesterase ICME</fullName>
        <ecNumber evidence="3 4">3.1.1.n2</ecNumber>
    </recommendedName>
    <alternativeName>
        <fullName evidence="7 8">Isoprenylcysteine methylesterase</fullName>
    </alternativeName>
    <alternativeName>
        <fullName evidence="6">Prenylcysteine methylesterase</fullName>
        <shortName evidence="6">AtPCME</shortName>
    </alternativeName>
</protein>
<accession>Q94AS5</accession>
<accession>F4KBA0</accession>
<accession>Q9LFU2</accession>
<reference key="1">
    <citation type="journal article" date="2000" name="Nature">
        <title>Sequence and analysis of chromosome 5 of the plant Arabidopsis thaliana.</title>
        <authorList>
            <person name="Tabata S."/>
            <person name="Kaneko T."/>
            <person name="Nakamura Y."/>
            <person name="Kotani H."/>
            <person name="Kato T."/>
            <person name="Asamizu E."/>
            <person name="Miyajima N."/>
            <person name="Sasamoto S."/>
            <person name="Kimura T."/>
            <person name="Hosouchi T."/>
            <person name="Kawashima K."/>
            <person name="Kohara M."/>
            <person name="Matsumoto M."/>
            <person name="Matsuno A."/>
            <person name="Muraki A."/>
            <person name="Nakayama S."/>
            <person name="Nakazaki N."/>
            <person name="Naruo K."/>
            <person name="Okumura S."/>
            <person name="Shinpo S."/>
            <person name="Takeuchi C."/>
            <person name="Wada T."/>
            <person name="Watanabe A."/>
            <person name="Yamada M."/>
            <person name="Yasuda M."/>
            <person name="Sato S."/>
            <person name="de la Bastide M."/>
            <person name="Huang E."/>
            <person name="Spiegel L."/>
            <person name="Gnoj L."/>
            <person name="O'Shaughnessy A."/>
            <person name="Preston R."/>
            <person name="Habermann K."/>
            <person name="Murray J."/>
            <person name="Johnson D."/>
            <person name="Rohlfing T."/>
            <person name="Nelson J."/>
            <person name="Stoneking T."/>
            <person name="Pepin K."/>
            <person name="Spieth J."/>
            <person name="Sekhon M."/>
            <person name="Armstrong J."/>
            <person name="Becker M."/>
            <person name="Belter E."/>
            <person name="Cordum H."/>
            <person name="Cordes M."/>
            <person name="Courtney L."/>
            <person name="Courtney W."/>
            <person name="Dante M."/>
            <person name="Du H."/>
            <person name="Edwards J."/>
            <person name="Fryman J."/>
            <person name="Haakensen B."/>
            <person name="Lamar E."/>
            <person name="Latreille P."/>
            <person name="Leonard S."/>
            <person name="Meyer R."/>
            <person name="Mulvaney E."/>
            <person name="Ozersky P."/>
            <person name="Riley A."/>
            <person name="Strowmatt C."/>
            <person name="Wagner-McPherson C."/>
            <person name="Wollam A."/>
            <person name="Yoakum M."/>
            <person name="Bell M."/>
            <person name="Dedhia N."/>
            <person name="Parnell L."/>
            <person name="Shah R."/>
            <person name="Rodriguez M."/>
            <person name="Hoon See L."/>
            <person name="Vil D."/>
            <person name="Baker J."/>
            <person name="Kirchoff K."/>
            <person name="Toth K."/>
            <person name="King L."/>
            <person name="Bahret A."/>
            <person name="Miller B."/>
            <person name="Marra M.A."/>
            <person name="Martienssen R."/>
            <person name="McCombie W.R."/>
            <person name="Wilson R.K."/>
            <person name="Murphy G."/>
            <person name="Bancroft I."/>
            <person name="Volckaert G."/>
            <person name="Wambutt R."/>
            <person name="Duesterhoeft A."/>
            <person name="Stiekema W."/>
            <person name="Pohl T."/>
            <person name="Entian K.-D."/>
            <person name="Terryn N."/>
            <person name="Hartley N."/>
            <person name="Bent E."/>
            <person name="Johnson S."/>
            <person name="Langham S.-A."/>
            <person name="McCullagh B."/>
            <person name="Robben J."/>
            <person name="Grymonprez B."/>
            <person name="Zimmermann W."/>
            <person name="Ramsperger U."/>
            <person name="Wedler H."/>
            <person name="Balke K."/>
            <person name="Wedler E."/>
            <person name="Peters S."/>
            <person name="van Staveren M."/>
            <person name="Dirkse W."/>
            <person name="Mooijman P."/>
            <person name="Klein Lankhorst R."/>
            <person name="Weitzenegger T."/>
            <person name="Bothe G."/>
            <person name="Rose M."/>
            <person name="Hauf J."/>
            <person name="Berneiser S."/>
            <person name="Hempel S."/>
            <person name="Feldpausch M."/>
            <person name="Lamberth S."/>
            <person name="Villarroel R."/>
            <person name="Gielen J."/>
            <person name="Ardiles W."/>
            <person name="Bents O."/>
            <person name="Lemcke K."/>
            <person name="Kolesov G."/>
            <person name="Mayer K.F.X."/>
            <person name="Rudd S."/>
            <person name="Schoof H."/>
            <person name="Schueller C."/>
            <person name="Zaccaria P."/>
            <person name="Mewes H.-W."/>
            <person name="Bevan M."/>
            <person name="Fransz P.F."/>
        </authorList>
    </citation>
    <scope>NUCLEOTIDE SEQUENCE [LARGE SCALE GENOMIC DNA]</scope>
    <source>
        <strain>cv. Columbia</strain>
    </source>
</reference>
<reference key="2">
    <citation type="journal article" date="2017" name="Plant J.">
        <title>Araport11: a complete reannotation of the Arabidopsis thaliana reference genome.</title>
        <authorList>
            <person name="Cheng C.Y."/>
            <person name="Krishnakumar V."/>
            <person name="Chan A.P."/>
            <person name="Thibaud-Nissen F."/>
            <person name="Schobel S."/>
            <person name="Town C.D."/>
        </authorList>
    </citation>
    <scope>GENOME REANNOTATION</scope>
    <source>
        <strain>cv. Columbia</strain>
    </source>
</reference>
<reference key="3">
    <citation type="journal article" date="2003" name="Science">
        <title>Empirical analysis of transcriptional activity in the Arabidopsis genome.</title>
        <authorList>
            <person name="Yamada K."/>
            <person name="Lim J."/>
            <person name="Dale J.M."/>
            <person name="Chen H."/>
            <person name="Shinn P."/>
            <person name="Palm C.J."/>
            <person name="Southwick A.M."/>
            <person name="Wu H.C."/>
            <person name="Kim C.J."/>
            <person name="Nguyen M."/>
            <person name="Pham P.K."/>
            <person name="Cheuk R.F."/>
            <person name="Karlin-Newmann G."/>
            <person name="Liu S.X."/>
            <person name="Lam B."/>
            <person name="Sakano H."/>
            <person name="Wu T."/>
            <person name="Yu G."/>
            <person name="Miranda M."/>
            <person name="Quach H.L."/>
            <person name="Tripp M."/>
            <person name="Chang C.H."/>
            <person name="Lee J.M."/>
            <person name="Toriumi M.J."/>
            <person name="Chan M.M."/>
            <person name="Tang C.C."/>
            <person name="Onodera C.S."/>
            <person name="Deng J.M."/>
            <person name="Akiyama K."/>
            <person name="Ansari Y."/>
            <person name="Arakawa T."/>
            <person name="Banh J."/>
            <person name="Banno F."/>
            <person name="Bowser L."/>
            <person name="Brooks S.Y."/>
            <person name="Carninci P."/>
            <person name="Chao Q."/>
            <person name="Choy N."/>
            <person name="Enju A."/>
            <person name="Goldsmith A.D."/>
            <person name="Gurjal M."/>
            <person name="Hansen N.F."/>
            <person name="Hayashizaki Y."/>
            <person name="Johnson-Hopson C."/>
            <person name="Hsuan V.W."/>
            <person name="Iida K."/>
            <person name="Karnes M."/>
            <person name="Khan S."/>
            <person name="Koesema E."/>
            <person name="Ishida J."/>
            <person name="Jiang P.X."/>
            <person name="Jones T."/>
            <person name="Kawai J."/>
            <person name="Kamiya A."/>
            <person name="Meyers C."/>
            <person name="Nakajima M."/>
            <person name="Narusaka M."/>
            <person name="Seki M."/>
            <person name="Sakurai T."/>
            <person name="Satou M."/>
            <person name="Tamse R."/>
            <person name="Vaysberg M."/>
            <person name="Wallender E.K."/>
            <person name="Wong C."/>
            <person name="Yamamura Y."/>
            <person name="Yuan S."/>
            <person name="Shinozaki K."/>
            <person name="Davis R.W."/>
            <person name="Theologis A."/>
            <person name="Ecker J.R."/>
        </authorList>
    </citation>
    <scope>NUCLEOTIDE SEQUENCE [LARGE SCALE MRNA] (ISOFORM 1)</scope>
    <source>
        <strain>cv. Columbia</strain>
    </source>
</reference>
<reference key="4">
    <citation type="journal article" date="2006" name="Gene">
        <title>Prenylcysteine methylesterase in Arabidopsis thaliana.</title>
        <authorList>
            <person name="Deem A.K."/>
            <person name="Bultema R.L."/>
            <person name="Crowell D.N."/>
        </authorList>
    </citation>
    <scope>FUNCTION</scope>
    <scope>CATALYTIC ACTIVITY</scope>
    <source>
        <strain>cv. Columbia</strain>
    </source>
</reference>
<reference key="5">
    <citation type="journal article" date="2008" name="Plant Cell">
        <title>Isoprenylcysteine methylation and demethylation regulate abscisic acid signaling in Arabidopsis.</title>
        <authorList>
            <person name="Huizinga D.H."/>
            <person name="Omosegbon O."/>
            <person name="Omery B."/>
            <person name="Crowell D.N."/>
        </authorList>
    </citation>
    <scope>FUNCTION</scope>
    <scope>CATALYTIC ACTIVITY</scope>
    <scope>INDUCTION BY ABSCISIC ACID</scope>
    <source>
        <strain>cv. Columbia</strain>
    </source>
</reference>
<reference key="6">
    <citation type="journal article" date="2010" name="BMC Plant Biol.">
        <title>Characterization, sub-cellular localization and expression profiling of the isoprenylcysteine methylesterase gene family in Arabidopsis thaliana.</title>
        <authorList>
            <person name="Lan P."/>
            <person name="Li W."/>
            <person name="Wang H."/>
            <person name="Ma W."/>
        </authorList>
    </citation>
    <scope>FUNCTION</scope>
    <scope>SUBCELLULAR LOCATION</scope>
    <scope>TISSUE SPECIFICITY</scope>
    <scope>INDUCTION</scope>
    <source>
        <strain>cv. Columbia</strain>
    </source>
</reference>
<keyword id="KW-0025">Alternative splicing</keyword>
<keyword id="KW-0256">Endoplasmic reticulum</keyword>
<keyword id="KW-0333">Golgi apparatus</keyword>
<keyword id="KW-0378">Hydrolase</keyword>
<keyword id="KW-0472">Membrane</keyword>
<keyword id="KW-1185">Reference proteome</keyword>
<keyword id="KW-0812">Transmembrane</keyword>
<keyword id="KW-1133">Transmembrane helix</keyword>
<gene>
    <name evidence="7 8" type="primary">ICME</name>
    <name evidence="6" type="synonym">PCME</name>
    <name evidence="10" type="ordered locus">At5g15860</name>
    <name evidence="11" type="ORF">F14F8.240</name>
</gene>
<dbReference type="EC" id="3.1.1.n2" evidence="3 4"/>
<dbReference type="EMBL" id="AL391144">
    <property type="protein sequence ID" value="CAC01785.1"/>
    <property type="status" value="ALT_SEQ"/>
    <property type="molecule type" value="Genomic_DNA"/>
</dbReference>
<dbReference type="EMBL" id="CP002688">
    <property type="protein sequence ID" value="AED92217.1"/>
    <property type="molecule type" value="Genomic_DNA"/>
</dbReference>
<dbReference type="EMBL" id="CP002688">
    <property type="protein sequence ID" value="AED92218.1"/>
    <property type="molecule type" value="Genomic_DNA"/>
</dbReference>
<dbReference type="EMBL" id="AY045829">
    <property type="protein sequence ID" value="AAK76503.1"/>
    <property type="molecule type" value="mRNA"/>
</dbReference>
<dbReference type="EMBL" id="AY091367">
    <property type="protein sequence ID" value="AAM14306.1"/>
    <property type="molecule type" value="mRNA"/>
</dbReference>
<dbReference type="PIR" id="T51415">
    <property type="entry name" value="T51415"/>
</dbReference>
<dbReference type="RefSeq" id="NP_197090.2">
    <molecule id="Q94AS5-1"/>
    <property type="nucleotide sequence ID" value="NM_121591.5"/>
</dbReference>
<dbReference type="RefSeq" id="NP_974786.1">
    <molecule id="Q94AS5-2"/>
    <property type="nucleotide sequence ID" value="NM_203057.1"/>
</dbReference>
<dbReference type="SMR" id="Q94AS5"/>
<dbReference type="BioGRID" id="16719">
    <property type="interactions" value="1"/>
</dbReference>
<dbReference type="FunCoup" id="Q94AS5">
    <property type="interactions" value="406"/>
</dbReference>
<dbReference type="STRING" id="3702.Q94AS5"/>
<dbReference type="ESTHER" id="arath-F14F8.240">
    <property type="family name" value="BD-FAE"/>
</dbReference>
<dbReference type="MEROPS" id="S09.A26"/>
<dbReference type="iPTMnet" id="Q94AS5"/>
<dbReference type="PaxDb" id="3702-AT5G15860.1"/>
<dbReference type="ProteomicsDB" id="228761">
    <molecule id="Q94AS5-1"/>
</dbReference>
<dbReference type="EnsemblPlants" id="AT5G15860.1">
    <molecule id="Q94AS5-1"/>
    <property type="protein sequence ID" value="AT5G15860.1"/>
    <property type="gene ID" value="AT5G15860"/>
</dbReference>
<dbReference type="EnsemblPlants" id="AT5G15860.2">
    <molecule id="Q94AS5-2"/>
    <property type="protein sequence ID" value="AT5G15860.2"/>
    <property type="gene ID" value="AT5G15860"/>
</dbReference>
<dbReference type="GeneID" id="831443"/>
<dbReference type="Gramene" id="AT5G15860.1">
    <molecule id="Q94AS5-1"/>
    <property type="protein sequence ID" value="AT5G15860.1"/>
    <property type="gene ID" value="AT5G15860"/>
</dbReference>
<dbReference type="Gramene" id="AT5G15860.2">
    <molecule id="Q94AS5-2"/>
    <property type="protein sequence ID" value="AT5G15860.2"/>
    <property type="gene ID" value="AT5G15860"/>
</dbReference>
<dbReference type="KEGG" id="ath:AT5G15860"/>
<dbReference type="Araport" id="AT5G15860"/>
<dbReference type="TAIR" id="AT5G15860">
    <property type="gene designation" value="PCME"/>
</dbReference>
<dbReference type="eggNOG" id="KOG1516">
    <property type="taxonomic scope" value="Eukaryota"/>
</dbReference>
<dbReference type="HOGENOM" id="CLU_012494_2_4_1"/>
<dbReference type="InParanoid" id="Q94AS5"/>
<dbReference type="OMA" id="GYRWMTR"/>
<dbReference type="OrthoDB" id="6495301at2759"/>
<dbReference type="PhylomeDB" id="Q94AS5"/>
<dbReference type="BioCyc" id="MetaCyc:AT5G15860-MONOMER"/>
<dbReference type="PRO" id="PR:Q94AS5"/>
<dbReference type="Proteomes" id="UP000006548">
    <property type="component" value="Chromosome 5"/>
</dbReference>
<dbReference type="ExpressionAtlas" id="Q94AS5">
    <property type="expression patterns" value="baseline and differential"/>
</dbReference>
<dbReference type="GO" id="GO:0005789">
    <property type="term" value="C:endoplasmic reticulum membrane"/>
    <property type="evidence" value="ECO:0000314"/>
    <property type="project" value="UniProtKB"/>
</dbReference>
<dbReference type="GO" id="GO:0000139">
    <property type="term" value="C:Golgi membrane"/>
    <property type="evidence" value="ECO:0000314"/>
    <property type="project" value="UniProtKB"/>
</dbReference>
<dbReference type="GO" id="GO:0016020">
    <property type="term" value="C:membrane"/>
    <property type="evidence" value="ECO:0000314"/>
    <property type="project" value="TAIR"/>
</dbReference>
<dbReference type="GO" id="GO:0010296">
    <property type="term" value="F:prenylcysteine methylesterase activity"/>
    <property type="evidence" value="ECO:0000314"/>
    <property type="project" value="TAIR"/>
</dbReference>
<dbReference type="FunFam" id="3.40.50.1820:FF:000084">
    <property type="entry name" value="Isoprenylcysteine alpha-carbonyl methylesterase ICME"/>
    <property type="match status" value="1"/>
</dbReference>
<dbReference type="Gene3D" id="3.40.50.1820">
    <property type="entry name" value="alpha/beta hydrolase"/>
    <property type="match status" value="1"/>
</dbReference>
<dbReference type="InterPro" id="IPR029058">
    <property type="entry name" value="AB_hydrolase_fold"/>
</dbReference>
<dbReference type="InterPro" id="IPR049492">
    <property type="entry name" value="BD-FAE-like_dom"/>
</dbReference>
<dbReference type="InterPro" id="IPR019826">
    <property type="entry name" value="Carboxylesterase_B_AS"/>
</dbReference>
<dbReference type="InterPro" id="IPR050300">
    <property type="entry name" value="GDXG_lipolytic_enzyme"/>
</dbReference>
<dbReference type="PANTHER" id="PTHR48081">
    <property type="entry name" value="AB HYDROLASE SUPERFAMILY PROTEIN C4A8.06C"/>
    <property type="match status" value="1"/>
</dbReference>
<dbReference type="PANTHER" id="PTHR48081:SF33">
    <property type="entry name" value="KYNURENINE FORMAMIDASE"/>
    <property type="match status" value="1"/>
</dbReference>
<dbReference type="Pfam" id="PF20434">
    <property type="entry name" value="BD-FAE"/>
    <property type="match status" value="1"/>
</dbReference>
<dbReference type="SUPFAM" id="SSF53474">
    <property type="entry name" value="alpha/beta-Hydrolases"/>
    <property type="match status" value="1"/>
</dbReference>